<protein>
    <recommendedName>
        <fullName evidence="4">Tubulin-specific chaperone E</fullName>
    </recommendedName>
    <alternativeName>
        <fullName evidence="5">Tubulin-folding cofactor E</fullName>
    </alternativeName>
</protein>
<evidence type="ECO:0000255" key="1"/>
<evidence type="ECO:0000255" key="2">
    <source>
        <dbReference type="PROSITE-ProRule" id="PRU00045"/>
    </source>
</evidence>
<evidence type="ECO:0000269" key="3">
    <source>
    </source>
</evidence>
<evidence type="ECO:0000303" key="4">
    <source>
    </source>
</evidence>
<evidence type="ECO:0000305" key="5"/>
<evidence type="ECO:0000312" key="6">
    <source>
        <dbReference type="EMBL" id="AAM48343.1"/>
    </source>
</evidence>
<evidence type="ECO:0000312" key="7">
    <source>
        <dbReference type="EMBL" id="ACH92265.1"/>
    </source>
</evidence>
<evidence type="ECO:0000312" key="8">
    <source>
        <dbReference type="FlyBase" id="FBgn0033055"/>
    </source>
</evidence>
<evidence type="ECO:0000312" key="9">
    <source>
        <dbReference type="Proteomes" id="UP000000803"/>
    </source>
</evidence>
<feature type="chain" id="PRO_0000439453" description="Tubulin-specific chaperone E">
    <location>
        <begin position="1"/>
        <end position="523"/>
    </location>
</feature>
<feature type="domain" description="CAP-Gly" evidence="2">
    <location>
        <begin position="31"/>
        <end position="75"/>
    </location>
</feature>
<feature type="repeat" description="LRR 1" evidence="1">
    <location>
        <begin position="155"/>
        <end position="180"/>
    </location>
</feature>
<feature type="repeat" description="LRR 2" evidence="1">
    <location>
        <begin position="181"/>
        <end position="204"/>
    </location>
</feature>
<feature type="repeat" description="LRR 3" evidence="1">
    <location>
        <begin position="209"/>
        <end position="232"/>
    </location>
</feature>
<feature type="repeat" description="LRR 4" evidence="1">
    <location>
        <begin position="235"/>
        <end position="258"/>
    </location>
</feature>
<feature type="repeat" description="LRR 5" evidence="1">
    <location>
        <begin position="260"/>
        <end position="284"/>
    </location>
</feature>
<feature type="repeat" description="LRR 6" evidence="1">
    <location>
        <begin position="285"/>
        <end position="310"/>
    </location>
</feature>
<feature type="repeat" description="LRR 7" evidence="1">
    <location>
        <begin position="315"/>
        <end position="337"/>
    </location>
</feature>
<feature type="sequence conflict" description="In Ref. 3; AAM48343." evidence="5" ref="3">
    <original>E</original>
    <variation>V</variation>
    <location>
        <position position="103"/>
    </location>
</feature>
<keyword id="KW-0143">Chaperone</keyword>
<keyword id="KW-0963">Cytoplasm</keyword>
<keyword id="KW-0433">Leucine-rich repeat</keyword>
<keyword id="KW-0524">Neurogenesis</keyword>
<keyword id="KW-1185">Reference proteome</keyword>
<keyword id="KW-0677">Repeat</keyword>
<proteinExistence type="evidence at protein level"/>
<organism evidence="9">
    <name type="scientific">Drosophila melanogaster</name>
    <name type="common">Fruit fly</name>
    <dbReference type="NCBI Taxonomy" id="7227"/>
    <lineage>
        <taxon>Eukaryota</taxon>
        <taxon>Metazoa</taxon>
        <taxon>Ecdysozoa</taxon>
        <taxon>Arthropoda</taxon>
        <taxon>Hexapoda</taxon>
        <taxon>Insecta</taxon>
        <taxon>Pterygota</taxon>
        <taxon>Neoptera</taxon>
        <taxon>Endopterygota</taxon>
        <taxon>Diptera</taxon>
        <taxon>Brachycera</taxon>
        <taxon>Muscomorpha</taxon>
        <taxon>Ephydroidea</taxon>
        <taxon>Drosophilidae</taxon>
        <taxon>Drosophila</taxon>
        <taxon>Sophophora</taxon>
    </lineage>
</organism>
<dbReference type="EMBL" id="AE013599">
    <property type="protein sequence ID" value="AAF57288.3"/>
    <property type="molecule type" value="Genomic_DNA"/>
</dbReference>
<dbReference type="EMBL" id="AE013599">
    <property type="protein sequence ID" value="AAS64773.1"/>
    <property type="molecule type" value="Genomic_DNA"/>
</dbReference>
<dbReference type="EMBL" id="AY118314">
    <property type="protein sequence ID" value="AAM48343.1"/>
    <property type="molecule type" value="mRNA"/>
</dbReference>
<dbReference type="EMBL" id="BT044200">
    <property type="protein sequence ID" value="ACH92265.1"/>
    <property type="molecule type" value="mRNA"/>
</dbReference>
<dbReference type="RefSeq" id="NP_610197.2">
    <property type="nucleotide sequence ID" value="NM_136353.2"/>
</dbReference>
<dbReference type="RefSeq" id="NP_995747.1">
    <property type="nucleotide sequence ID" value="NM_206025.2"/>
</dbReference>
<dbReference type="SMR" id="A1Z6J5"/>
<dbReference type="FunCoup" id="A1Z6J5">
    <property type="interactions" value="1916"/>
</dbReference>
<dbReference type="IntAct" id="A1Z6J5">
    <property type="interactions" value="1"/>
</dbReference>
<dbReference type="STRING" id="7227.FBpp0307274"/>
<dbReference type="PaxDb" id="7227-FBpp0085327"/>
<dbReference type="DNASU" id="35532"/>
<dbReference type="EnsemblMetazoa" id="FBtr0085974">
    <property type="protein sequence ID" value="FBpp0085327"/>
    <property type="gene ID" value="FBgn0033055"/>
</dbReference>
<dbReference type="EnsemblMetazoa" id="FBtr0335286">
    <property type="protein sequence ID" value="FBpp0307274"/>
    <property type="gene ID" value="FBgn0033055"/>
</dbReference>
<dbReference type="GeneID" id="35532"/>
<dbReference type="KEGG" id="dme:Dmel_CG7861"/>
<dbReference type="UCSC" id="CG7861-RA">
    <property type="organism name" value="d. melanogaster"/>
</dbReference>
<dbReference type="UCSC" id="CG7861-RB">
    <property type="organism name" value="d. melanogaster"/>
</dbReference>
<dbReference type="AGR" id="FB:FBgn0033055"/>
<dbReference type="CTD" id="6905"/>
<dbReference type="FlyBase" id="FBgn0033055">
    <property type="gene designation" value="Tbce"/>
</dbReference>
<dbReference type="VEuPathDB" id="VectorBase:FBgn0033055"/>
<dbReference type="eggNOG" id="KOG3207">
    <property type="taxonomic scope" value="Eukaryota"/>
</dbReference>
<dbReference type="GeneTree" id="ENSGT00530000063405"/>
<dbReference type="HOGENOM" id="CLU_017716_5_0_1"/>
<dbReference type="InParanoid" id="A1Z6J5"/>
<dbReference type="OMA" id="SEESHMF"/>
<dbReference type="OrthoDB" id="5273213at2759"/>
<dbReference type="PhylomeDB" id="A1Z6J5"/>
<dbReference type="BioGRID-ORCS" id="35532">
    <property type="hits" value="0 hits in 1 CRISPR screen"/>
</dbReference>
<dbReference type="GenomeRNAi" id="35532"/>
<dbReference type="PRO" id="PR:A1Z6J5"/>
<dbReference type="Proteomes" id="UP000000803">
    <property type="component" value="Chromosome 2R"/>
</dbReference>
<dbReference type="Bgee" id="FBgn0033055">
    <property type="expression patterns" value="Expressed in embryonic/larval hemocyte (Drosophila) and 132 other cell types or tissues"/>
</dbReference>
<dbReference type="GO" id="GO:0005737">
    <property type="term" value="C:cytoplasm"/>
    <property type="evidence" value="ECO:0000314"/>
    <property type="project" value="FlyBase"/>
</dbReference>
<dbReference type="GO" id="GO:0045202">
    <property type="term" value="C:synapse"/>
    <property type="evidence" value="ECO:0007669"/>
    <property type="project" value="GOC"/>
</dbReference>
<dbReference type="GO" id="GO:0043014">
    <property type="term" value="F:alpha-tubulin binding"/>
    <property type="evidence" value="ECO:0000318"/>
    <property type="project" value="GO_Central"/>
</dbReference>
<dbReference type="GO" id="GO:0000226">
    <property type="term" value="P:microtubule cytoskeleton organization"/>
    <property type="evidence" value="ECO:0000318"/>
    <property type="project" value="GO_Central"/>
</dbReference>
<dbReference type="GO" id="GO:0046785">
    <property type="term" value="P:microtubule polymerization"/>
    <property type="evidence" value="ECO:0000315"/>
    <property type="project" value="FlyBase"/>
</dbReference>
<dbReference type="GO" id="GO:0007399">
    <property type="term" value="P:nervous system development"/>
    <property type="evidence" value="ECO:0007669"/>
    <property type="project" value="UniProtKB-KW"/>
</dbReference>
<dbReference type="GO" id="GO:0007274">
    <property type="term" value="P:neuromuscular synaptic transmission"/>
    <property type="evidence" value="ECO:0000315"/>
    <property type="project" value="FlyBase"/>
</dbReference>
<dbReference type="GO" id="GO:0007023">
    <property type="term" value="P:post-chaperonin tubulin folding pathway"/>
    <property type="evidence" value="ECO:0000318"/>
    <property type="project" value="GO_Central"/>
</dbReference>
<dbReference type="GO" id="GO:0008582">
    <property type="term" value="P:regulation of synaptic assembly at neuromuscular junction"/>
    <property type="evidence" value="ECO:0000315"/>
    <property type="project" value="FlyBase"/>
</dbReference>
<dbReference type="GO" id="GO:0007021">
    <property type="term" value="P:tubulin complex assembly"/>
    <property type="evidence" value="ECO:0000318"/>
    <property type="project" value="GO_Central"/>
</dbReference>
<dbReference type="CDD" id="cd17044">
    <property type="entry name" value="Ubl_TBCE"/>
    <property type="match status" value="1"/>
</dbReference>
<dbReference type="FunFam" id="2.30.30.190:FF:000008">
    <property type="entry name" value="Tubulin-specific chaperone E"/>
    <property type="match status" value="1"/>
</dbReference>
<dbReference type="FunFam" id="3.10.20.90:FF:000487">
    <property type="entry name" value="Tubulin-specific chaperone E"/>
    <property type="match status" value="1"/>
</dbReference>
<dbReference type="FunFam" id="3.80.10.10:FF:000973">
    <property type="entry name" value="Tubulin-specific chaperone E"/>
    <property type="match status" value="1"/>
</dbReference>
<dbReference type="FunFam" id="3.80.10.10:FF:001292">
    <property type="entry name" value="Tubulin-specific chaperone E"/>
    <property type="match status" value="1"/>
</dbReference>
<dbReference type="Gene3D" id="2.30.30.190">
    <property type="entry name" value="CAP Gly-rich-like domain"/>
    <property type="match status" value="1"/>
</dbReference>
<dbReference type="Gene3D" id="3.10.20.90">
    <property type="entry name" value="Phosphatidylinositol 3-kinase Catalytic Subunit, Chain A, domain 1"/>
    <property type="match status" value="1"/>
</dbReference>
<dbReference type="Gene3D" id="3.80.10.10">
    <property type="entry name" value="Ribonuclease Inhibitor"/>
    <property type="match status" value="2"/>
</dbReference>
<dbReference type="InterPro" id="IPR036859">
    <property type="entry name" value="CAP-Gly_dom_sf"/>
</dbReference>
<dbReference type="InterPro" id="IPR000938">
    <property type="entry name" value="CAP-Gly_domain"/>
</dbReference>
<dbReference type="InterPro" id="IPR032675">
    <property type="entry name" value="LRR_dom_sf"/>
</dbReference>
<dbReference type="InterPro" id="IPR050836">
    <property type="entry name" value="SDS22/Internalin_LRR"/>
</dbReference>
<dbReference type="InterPro" id="IPR029071">
    <property type="entry name" value="Ubiquitin-like_domsf"/>
</dbReference>
<dbReference type="InterPro" id="IPR044079">
    <property type="entry name" value="Ubl_TBCE"/>
</dbReference>
<dbReference type="PANTHER" id="PTHR46652">
    <property type="entry name" value="LEUCINE-RICH REPEAT AND IQ DOMAIN-CONTAINING PROTEIN 1-RELATED"/>
    <property type="match status" value="1"/>
</dbReference>
<dbReference type="PANTHER" id="PTHR46652:SF3">
    <property type="entry name" value="LEUCINE-RICH REPEAT-CONTAINING PROTEIN 9"/>
    <property type="match status" value="1"/>
</dbReference>
<dbReference type="Pfam" id="PF01302">
    <property type="entry name" value="CAP_GLY"/>
    <property type="match status" value="1"/>
</dbReference>
<dbReference type="SMART" id="SM01052">
    <property type="entry name" value="CAP_GLY"/>
    <property type="match status" value="1"/>
</dbReference>
<dbReference type="SUPFAM" id="SSF74924">
    <property type="entry name" value="Cap-Gly domain"/>
    <property type="match status" value="1"/>
</dbReference>
<dbReference type="SUPFAM" id="SSF52058">
    <property type="entry name" value="L domain-like"/>
    <property type="match status" value="1"/>
</dbReference>
<dbReference type="SUPFAM" id="SSF54236">
    <property type="entry name" value="Ubiquitin-like"/>
    <property type="match status" value="1"/>
</dbReference>
<dbReference type="PROSITE" id="PS50245">
    <property type="entry name" value="CAP_GLY_2"/>
    <property type="match status" value="1"/>
</dbReference>
<reference evidence="9" key="1">
    <citation type="journal article" date="2000" name="Science">
        <title>The genome sequence of Drosophila melanogaster.</title>
        <authorList>
            <person name="Adams M.D."/>
            <person name="Celniker S.E."/>
            <person name="Holt R.A."/>
            <person name="Evans C.A."/>
            <person name="Gocayne J.D."/>
            <person name="Amanatides P.G."/>
            <person name="Scherer S.E."/>
            <person name="Li P.W."/>
            <person name="Hoskins R.A."/>
            <person name="Galle R.F."/>
            <person name="George R.A."/>
            <person name="Lewis S.E."/>
            <person name="Richards S."/>
            <person name="Ashburner M."/>
            <person name="Henderson S.N."/>
            <person name="Sutton G.G."/>
            <person name="Wortman J.R."/>
            <person name="Yandell M.D."/>
            <person name="Zhang Q."/>
            <person name="Chen L.X."/>
            <person name="Brandon R.C."/>
            <person name="Rogers Y.-H.C."/>
            <person name="Blazej R.G."/>
            <person name="Champe M."/>
            <person name="Pfeiffer B.D."/>
            <person name="Wan K.H."/>
            <person name="Doyle C."/>
            <person name="Baxter E.G."/>
            <person name="Helt G."/>
            <person name="Nelson C.R."/>
            <person name="Miklos G.L.G."/>
            <person name="Abril J.F."/>
            <person name="Agbayani A."/>
            <person name="An H.-J."/>
            <person name="Andrews-Pfannkoch C."/>
            <person name="Baldwin D."/>
            <person name="Ballew R.M."/>
            <person name="Basu A."/>
            <person name="Baxendale J."/>
            <person name="Bayraktaroglu L."/>
            <person name="Beasley E.M."/>
            <person name="Beeson K.Y."/>
            <person name="Benos P.V."/>
            <person name="Berman B.P."/>
            <person name="Bhandari D."/>
            <person name="Bolshakov S."/>
            <person name="Borkova D."/>
            <person name="Botchan M.R."/>
            <person name="Bouck J."/>
            <person name="Brokstein P."/>
            <person name="Brottier P."/>
            <person name="Burtis K.C."/>
            <person name="Busam D.A."/>
            <person name="Butler H."/>
            <person name="Cadieu E."/>
            <person name="Center A."/>
            <person name="Chandra I."/>
            <person name="Cherry J.M."/>
            <person name="Cawley S."/>
            <person name="Dahlke C."/>
            <person name="Davenport L.B."/>
            <person name="Davies P."/>
            <person name="de Pablos B."/>
            <person name="Delcher A."/>
            <person name="Deng Z."/>
            <person name="Mays A.D."/>
            <person name="Dew I."/>
            <person name="Dietz S.M."/>
            <person name="Dodson K."/>
            <person name="Doup L.E."/>
            <person name="Downes M."/>
            <person name="Dugan-Rocha S."/>
            <person name="Dunkov B.C."/>
            <person name="Dunn P."/>
            <person name="Durbin K.J."/>
            <person name="Evangelista C.C."/>
            <person name="Ferraz C."/>
            <person name="Ferriera S."/>
            <person name="Fleischmann W."/>
            <person name="Fosler C."/>
            <person name="Gabrielian A.E."/>
            <person name="Garg N.S."/>
            <person name="Gelbart W.M."/>
            <person name="Glasser K."/>
            <person name="Glodek A."/>
            <person name="Gong F."/>
            <person name="Gorrell J.H."/>
            <person name="Gu Z."/>
            <person name="Guan P."/>
            <person name="Harris M."/>
            <person name="Harris N.L."/>
            <person name="Harvey D.A."/>
            <person name="Heiman T.J."/>
            <person name="Hernandez J.R."/>
            <person name="Houck J."/>
            <person name="Hostin D."/>
            <person name="Houston K.A."/>
            <person name="Howland T.J."/>
            <person name="Wei M.-H."/>
            <person name="Ibegwam C."/>
            <person name="Jalali M."/>
            <person name="Kalush F."/>
            <person name="Karpen G.H."/>
            <person name="Ke Z."/>
            <person name="Kennison J.A."/>
            <person name="Ketchum K.A."/>
            <person name="Kimmel B.E."/>
            <person name="Kodira C.D."/>
            <person name="Kraft C.L."/>
            <person name="Kravitz S."/>
            <person name="Kulp D."/>
            <person name="Lai Z."/>
            <person name="Lasko P."/>
            <person name="Lei Y."/>
            <person name="Levitsky A.A."/>
            <person name="Li J.H."/>
            <person name="Li Z."/>
            <person name="Liang Y."/>
            <person name="Lin X."/>
            <person name="Liu X."/>
            <person name="Mattei B."/>
            <person name="McIntosh T.C."/>
            <person name="McLeod M.P."/>
            <person name="McPherson D."/>
            <person name="Merkulov G."/>
            <person name="Milshina N.V."/>
            <person name="Mobarry C."/>
            <person name="Morris J."/>
            <person name="Moshrefi A."/>
            <person name="Mount S.M."/>
            <person name="Moy M."/>
            <person name="Murphy B."/>
            <person name="Murphy L."/>
            <person name="Muzny D.M."/>
            <person name="Nelson D.L."/>
            <person name="Nelson D.R."/>
            <person name="Nelson K.A."/>
            <person name="Nixon K."/>
            <person name="Nusskern D.R."/>
            <person name="Pacleb J.M."/>
            <person name="Palazzolo M."/>
            <person name="Pittman G.S."/>
            <person name="Pan S."/>
            <person name="Pollard J."/>
            <person name="Puri V."/>
            <person name="Reese M.G."/>
            <person name="Reinert K."/>
            <person name="Remington K."/>
            <person name="Saunders R.D.C."/>
            <person name="Scheeler F."/>
            <person name="Shen H."/>
            <person name="Shue B.C."/>
            <person name="Siden-Kiamos I."/>
            <person name="Simpson M."/>
            <person name="Skupski M.P."/>
            <person name="Smith T.J."/>
            <person name="Spier E."/>
            <person name="Spradling A.C."/>
            <person name="Stapleton M."/>
            <person name="Strong R."/>
            <person name="Sun E."/>
            <person name="Svirskas R."/>
            <person name="Tector C."/>
            <person name="Turner R."/>
            <person name="Venter E."/>
            <person name="Wang A.H."/>
            <person name="Wang X."/>
            <person name="Wang Z.-Y."/>
            <person name="Wassarman D.A."/>
            <person name="Weinstock G.M."/>
            <person name="Weissenbach J."/>
            <person name="Williams S.M."/>
            <person name="Woodage T."/>
            <person name="Worley K.C."/>
            <person name="Wu D."/>
            <person name="Yang S."/>
            <person name="Yao Q.A."/>
            <person name="Ye J."/>
            <person name="Yeh R.-F."/>
            <person name="Zaveri J.S."/>
            <person name="Zhan M."/>
            <person name="Zhang G."/>
            <person name="Zhao Q."/>
            <person name="Zheng L."/>
            <person name="Zheng X.H."/>
            <person name="Zhong F.N."/>
            <person name="Zhong W."/>
            <person name="Zhou X."/>
            <person name="Zhu S.C."/>
            <person name="Zhu X."/>
            <person name="Smith H.O."/>
            <person name="Gibbs R.A."/>
            <person name="Myers E.W."/>
            <person name="Rubin G.M."/>
            <person name="Venter J.C."/>
        </authorList>
    </citation>
    <scope>NUCLEOTIDE SEQUENCE [LARGE SCALE GENOMIC DNA]</scope>
    <source>
        <strain evidence="9">Berkeley</strain>
    </source>
</reference>
<reference evidence="9" key="2">
    <citation type="journal article" date="2002" name="Genome Biol.">
        <title>Annotation of the Drosophila melanogaster euchromatic genome: a systematic review.</title>
        <authorList>
            <person name="Misra S."/>
            <person name="Crosby M.A."/>
            <person name="Mungall C.J."/>
            <person name="Matthews B.B."/>
            <person name="Campbell K.S."/>
            <person name="Hradecky P."/>
            <person name="Huang Y."/>
            <person name="Kaminker J.S."/>
            <person name="Millburn G.H."/>
            <person name="Prochnik S.E."/>
            <person name="Smith C.D."/>
            <person name="Tupy J.L."/>
            <person name="Whitfield E.J."/>
            <person name="Bayraktaroglu L."/>
            <person name="Berman B.P."/>
            <person name="Bettencourt B.R."/>
            <person name="Celniker S.E."/>
            <person name="de Grey A.D.N.J."/>
            <person name="Drysdale R.A."/>
            <person name="Harris N.L."/>
            <person name="Richter J."/>
            <person name="Russo S."/>
            <person name="Schroeder A.J."/>
            <person name="Shu S.Q."/>
            <person name="Stapleton M."/>
            <person name="Yamada C."/>
            <person name="Ashburner M."/>
            <person name="Gelbart W.M."/>
            <person name="Rubin G.M."/>
            <person name="Lewis S.E."/>
        </authorList>
    </citation>
    <scope>GENOME REANNOTATION</scope>
    <source>
        <strain evidence="9">Berkeley</strain>
    </source>
</reference>
<reference evidence="6" key="3">
    <citation type="journal article" date="2002" name="Genome Biol.">
        <title>A Drosophila full-length cDNA resource.</title>
        <authorList>
            <person name="Stapleton M."/>
            <person name="Carlson J.W."/>
            <person name="Brokstein P."/>
            <person name="Yu C."/>
            <person name="Champe M."/>
            <person name="George R.A."/>
            <person name="Guarin H."/>
            <person name="Kronmiller B."/>
            <person name="Pacleb J.M."/>
            <person name="Park S."/>
            <person name="Wan K.H."/>
            <person name="Rubin G.M."/>
            <person name="Celniker S.E."/>
        </authorList>
    </citation>
    <scope>NUCLEOTIDE SEQUENCE [LARGE SCALE MRNA]</scope>
    <source>
        <strain evidence="6">Berkeley</strain>
        <tissue evidence="6">Ovary</tissue>
    </source>
</reference>
<reference evidence="7" key="4">
    <citation type="submission" date="2008-09" db="EMBL/GenBank/DDBJ databases">
        <authorList>
            <person name="Carlson J."/>
            <person name="Booth B."/>
            <person name="Frise E."/>
            <person name="Park S."/>
            <person name="Wan K."/>
            <person name="Yu C."/>
            <person name="Celniker S."/>
        </authorList>
    </citation>
    <scope>NUCLEOTIDE SEQUENCE [LARGE SCALE MRNA]</scope>
    <source>
        <strain evidence="7">Berkeley</strain>
    </source>
</reference>
<reference evidence="5" key="5">
    <citation type="journal article" date="2009" name="Development">
        <title>Drosophila Tubulin-specific chaperone E functions at neuromuscular synapses and is required for microtubule network formation.</title>
        <authorList>
            <person name="Jin S."/>
            <person name="Pan L."/>
            <person name="Liu Z."/>
            <person name="Wang Q."/>
            <person name="Xu Z."/>
            <person name="Zhang Y.Q."/>
        </authorList>
    </citation>
    <scope>FUNCTION</scope>
    <scope>SUBCELLULAR LOCATION</scope>
    <scope>DEVELOPMENTAL STAGE</scope>
    <scope>DISRUPTION PHENOTYPE</scope>
</reference>
<accession>A1Z6J5</accession>
<accession>A1Z6J4</accession>
<accession>Q8MT85</accession>
<name>TBCE_DROME</name>
<comment type="function">
    <text evidence="3">Tubulin-folding protein which is required for the development of the neuronal microtubule network. Essential for the development and function of neuromuscular synapses. Likely to promote microtubule formation by acting in the negative regulation of the microtubule-severing protein spas.</text>
</comment>
<comment type="subcellular location">
    <subcellularLocation>
        <location evidence="3">Cytoplasm</location>
    </subcellularLocation>
</comment>
<comment type="developmental stage">
    <text evidence="3">In embryos, expressed ubiquitously with higher expression levels in the central nervous system and muscles (at protein level). Expression levels decrease from the embryonic to larval stage (at protein level). In third-stage larva, high levels of expression in the epidermal cells with lower levels of expression in the muscles, central neurons and peripheral axons (at protein level).</text>
</comment>
<comment type="disruption phenotype">
    <text evidence="3">Embryonic lethal, with a few escapers that develop to first-instar larvae. In larval muscles the microtubule (MT) network is greatly reduced with a decrease in the number and length of MT fibers. RNAi-mediated knockdown in larval neurons and muscles results in a significant increase in roll-over time. RNAi-mediated knockdown in pre- and post-synaptic neurons results in increased branching number, increased bouton number and decreased bouton size at the neuromuscular junction (NMJ) synaptic terminals. Presynaptic knockdown also results in increased excitatory junction potentials (EJPs) and miniature excitatory junction potentials (mEJPs) of NMJ synapses, whereas knockdown in postsynaptic neurons has no effect on neurotransmission parameters.</text>
</comment>
<comment type="similarity">
    <text evidence="5">Belongs to the TBCE family.</text>
</comment>
<sequence>MVGIIDEVQLFYPLGTRIKIGDNYGTVRYVGEVSGHMGSWLGIEWDDGLRGKHNGIVDGKRYFQTQTPTGGSFIRPGKVGPCATLEDAARERYLNYDSSNVDESLIREAQASLQASLFEVVGMDKIARKQSKFEQLEEVSVDQTPVNAAGYLKELTHLTTLNVSHTLIWNWEIVASIAQQLPSLTNLNLSSNRLVLPTSSQITELEPSFRQLKRINLRSCGFSDWKDVMHTALLWPNILSLGLQENSLGQLAEVDRTKIFKQLHELDLHRTNIMDFDQVTKLGNLTTLRLLNIMENGIEEIKLPDCDSQEKLNIFVSLEQLNLLHNPIWNEADAFNELDKLPQLKRLSKTPHLKSNFDEMFSKAVASIASLQFINKAEVTAEQRRGAEYDIWKKYALDWMQATQGGTDSLREFCRRHRTYPLLVKKYGSPADFVPRSQAKQSNLINVSIRHQLTGETWEKKVPRMITVQTLQGLVMKRFRLSGDVPQLCYVDALHPDLVVPLDNNAKTLDFYSVQEHDTVLVQ</sequence>
<gene>
    <name evidence="4 8" type="primary">Tbce</name>
    <name evidence="8" type="ORF">CG7861</name>
</gene>